<organism>
    <name type="scientific">Nicotiana tabacum</name>
    <name type="common">Common tobacco</name>
    <dbReference type="NCBI Taxonomy" id="4097"/>
    <lineage>
        <taxon>Eukaryota</taxon>
        <taxon>Viridiplantae</taxon>
        <taxon>Streptophyta</taxon>
        <taxon>Embryophyta</taxon>
        <taxon>Tracheophyta</taxon>
        <taxon>Spermatophyta</taxon>
        <taxon>Magnoliopsida</taxon>
        <taxon>eudicotyledons</taxon>
        <taxon>Gunneridae</taxon>
        <taxon>Pentapetalae</taxon>
        <taxon>asterids</taxon>
        <taxon>lamiids</taxon>
        <taxon>Solanales</taxon>
        <taxon>Solanaceae</taxon>
        <taxon>Nicotianoideae</taxon>
        <taxon>Nicotianeae</taxon>
        <taxon>Nicotiana</taxon>
    </lineage>
</organism>
<evidence type="ECO:0000255" key="1">
    <source>
        <dbReference type="HAMAP-Rule" id="MF_01308"/>
    </source>
</evidence>
<evidence type="ECO:0000269" key="2">
    <source>
    </source>
</evidence>
<evidence type="ECO:0000305" key="3">
    <source>
    </source>
</evidence>
<gene>
    <name evidence="1" type="primary">cemA</name>
    <name evidence="3" type="synonym">ycf10</name>
</gene>
<sequence length="229" mass="26828">MAKKKAFTPLFYLASIVFLPWWISFSVNKCLESWVTNWWNTGQSEIFLNNIQEKSLLEKFIELEELLFLDEMIKEYSETHLEEFGIGIHKETIQLIKIQNENRIHTILHFSTNIICFIILSGYSILGNEKLVILNSWAQEFLYNLSDTVKAFSILLLTDLCIGFHSPHGWELMIGSIYKDFGFVHNDQIISGLVSTFPVILDTIFKYWIFRYLNRLSPSLVVIYHSMND</sequence>
<proteinExistence type="inferred from homology"/>
<comment type="function">
    <text evidence="1 2">Contributes to K(+)/H(+) antiport activity by supporting proton efflux to control proton extrusion and homeostasis in chloroplasts in a light-dependent manner to modulate photosynthesis (PubMed:34938941). Prevents excessive induction of non-photochemical quenching (NPQ) under continuous-light conditions (PubMed:34938941). Indirectly promotes efficient inorganic carbon uptake into chloroplasts (By similarity).</text>
</comment>
<comment type="catalytic activity">
    <reaction evidence="1">
        <text>K(+)(in) + H(+)(out) = K(+)(out) + H(+)(in)</text>
        <dbReference type="Rhea" id="RHEA:29467"/>
        <dbReference type="ChEBI" id="CHEBI:15378"/>
        <dbReference type="ChEBI" id="CHEBI:29103"/>
    </reaction>
</comment>
<comment type="subcellular location">
    <subcellularLocation>
        <location evidence="1">Plastid</location>
        <location evidence="1">Chloroplast inner membrane</location>
        <topology evidence="1">Multi-pass membrane protein</topology>
    </subcellularLocation>
</comment>
<comment type="disruption phenotype">
    <text evidence="2">Enhanced induction of non-photochemical quenching (NPQ) leading to pale-green phenotype in developing leaves under continuous-light conditions.</text>
</comment>
<comment type="similarity">
    <text evidence="1">Belongs to the CemA family.</text>
</comment>
<name>CEMA_TOBAC</name>
<protein>
    <recommendedName>
        <fullName evidence="1">Potassium/proton antiporter CemA</fullName>
    </recommendedName>
    <alternativeName>
        <fullName evidence="1">Chloroplast envelope membrane protein A</fullName>
        <shortName evidence="1">CemA</shortName>
    </alternativeName>
    <alternativeName>
        <fullName evidence="3">Potassium/proton antiporter Ycf10</fullName>
    </alternativeName>
</protein>
<reference key="1">
    <citation type="journal article" date="1986" name="EMBO J.">
        <title>The complete nucleotide sequence of the tobacco chloroplast genome: its gene organization and expression.</title>
        <authorList>
            <person name="Shinozaki K."/>
            <person name="Ohme M."/>
            <person name="Tanaka M."/>
            <person name="Wakasugi T."/>
            <person name="Hayashida N."/>
            <person name="Matsubayashi T."/>
            <person name="Zaita N."/>
            <person name="Chunwongse J."/>
            <person name="Obokata J."/>
            <person name="Yamaguchi-Shinozaki K."/>
            <person name="Ohto C."/>
            <person name="Torazawa K."/>
            <person name="Meng B.-Y."/>
            <person name="Sugita M."/>
            <person name="Deno H."/>
            <person name="Kamogashira T."/>
            <person name="Yamada K."/>
            <person name="Kusuda J."/>
            <person name="Takaiwa F."/>
            <person name="Kato A."/>
            <person name="Tohdoh N."/>
            <person name="Shimada H."/>
            <person name="Sugiura M."/>
        </authorList>
    </citation>
    <scope>NUCLEOTIDE SEQUENCE [LARGE SCALE GENOMIC DNA]</scope>
    <source>
        <strain>cv. Bright Yellow 4</strain>
    </source>
</reference>
<reference key="2">
    <citation type="journal article" date="2021" name="Plant Direct">
        <title>Lack of plastid-encoded Ycf10, a homolog of the nuclear-encoded DLDG1 and the cyanobacterial PxcA, enhances the induction of non-photochemical quenching in tobacco.</title>
        <authorList>
            <person name="Trinh M.D.L."/>
            <person name="Hashimoto A."/>
            <person name="Kono M."/>
            <person name="Takaichi S."/>
            <person name="Nakahira Y."/>
            <person name="Masuda S."/>
        </authorList>
    </citation>
    <scope>FUNCTION</scope>
    <scope>DISRUPTION PHENOTYPE</scope>
    <source>
        <strain>cv. Xanthi</strain>
    </source>
</reference>
<feature type="chain" id="PRO_0000216664" description="Potassium/proton antiporter CemA">
    <location>
        <begin position="1"/>
        <end position="229"/>
    </location>
</feature>
<feature type="transmembrane region" description="Helical" evidence="1">
    <location>
        <begin position="7"/>
        <end position="27"/>
    </location>
</feature>
<feature type="transmembrane region" description="Helical" evidence="1">
    <location>
        <begin position="107"/>
        <end position="127"/>
    </location>
</feature>
<feature type="transmembrane region" description="Helical" evidence="1">
    <location>
        <begin position="189"/>
        <end position="209"/>
    </location>
</feature>
<accession>P12213</accession>
<dbReference type="EMBL" id="Z00044">
    <property type="protein sequence ID" value="CAA77364.1"/>
    <property type="molecule type" value="Genomic_DNA"/>
</dbReference>
<dbReference type="PIR" id="A05198">
    <property type="entry name" value="A05198"/>
</dbReference>
<dbReference type="RefSeq" id="NP_054511.1">
    <property type="nucleotide sequence ID" value="NC_001879.2"/>
</dbReference>
<dbReference type="GeneID" id="1466298"/>
<dbReference type="KEGG" id="nta:1466298"/>
<dbReference type="OMA" id="VVIYHAI"/>
<dbReference type="OrthoDB" id="993at2759"/>
<dbReference type="Proteomes" id="UP000084051">
    <property type="component" value="Unplaced"/>
</dbReference>
<dbReference type="GO" id="GO:0009706">
    <property type="term" value="C:chloroplast inner membrane"/>
    <property type="evidence" value="ECO:0007669"/>
    <property type="project" value="UniProtKB-SubCell"/>
</dbReference>
<dbReference type="GO" id="GO:0015297">
    <property type="term" value="F:antiporter activity"/>
    <property type="evidence" value="ECO:0007669"/>
    <property type="project" value="UniProtKB-KW"/>
</dbReference>
<dbReference type="GO" id="GO:0015078">
    <property type="term" value="F:proton transmembrane transporter activity"/>
    <property type="evidence" value="ECO:0007669"/>
    <property type="project" value="UniProtKB-UniRule"/>
</dbReference>
<dbReference type="GO" id="GO:0006813">
    <property type="term" value="P:potassium ion transport"/>
    <property type="evidence" value="ECO:0007669"/>
    <property type="project" value="UniProtKB-UniRule"/>
</dbReference>
<dbReference type="HAMAP" id="MF_01308">
    <property type="entry name" value="CemA_PxcA"/>
    <property type="match status" value="1"/>
</dbReference>
<dbReference type="InterPro" id="IPR004282">
    <property type="entry name" value="CemA"/>
</dbReference>
<dbReference type="PANTHER" id="PTHR33650:SF2">
    <property type="entry name" value="CHLOROPLAST ENVELOPE MEMBRANE PROTEIN"/>
    <property type="match status" value="1"/>
</dbReference>
<dbReference type="PANTHER" id="PTHR33650">
    <property type="entry name" value="CHLOROPLAST ENVELOPE MEMBRANE PROTEIN-RELATED"/>
    <property type="match status" value="1"/>
</dbReference>
<dbReference type="Pfam" id="PF03040">
    <property type="entry name" value="CemA"/>
    <property type="match status" value="1"/>
</dbReference>
<keyword id="KW-0050">Antiport</keyword>
<keyword id="KW-0150">Chloroplast</keyword>
<keyword id="KW-0375">Hydrogen ion transport</keyword>
<keyword id="KW-0406">Ion transport</keyword>
<keyword id="KW-0472">Membrane</keyword>
<keyword id="KW-0934">Plastid</keyword>
<keyword id="KW-1001">Plastid inner membrane</keyword>
<keyword id="KW-0630">Potassium</keyword>
<keyword id="KW-0633">Potassium transport</keyword>
<keyword id="KW-1185">Reference proteome</keyword>
<keyword id="KW-0812">Transmembrane</keyword>
<keyword id="KW-1133">Transmembrane helix</keyword>
<keyword id="KW-0813">Transport</keyword>
<geneLocation type="chloroplast"/>